<feature type="chain" id="PRO_1000007243" description="Large ribosomal subunit protein bL28">
    <location>
        <begin position="1"/>
        <end position="63"/>
    </location>
</feature>
<comment type="similarity">
    <text evidence="1">Belongs to the bacterial ribosomal protein bL28 family.</text>
</comment>
<protein>
    <recommendedName>
        <fullName evidence="1">Large ribosomal subunit protein bL28</fullName>
    </recommendedName>
    <alternativeName>
        <fullName evidence="2">50S ribosomal protein L28</fullName>
    </alternativeName>
</protein>
<reference key="1">
    <citation type="journal article" date="2009" name="BMC Microbiol.">
        <title>The genome sequence of Geobacter metallireducens: features of metabolism, physiology and regulation common and dissimilar to Geobacter sulfurreducens.</title>
        <authorList>
            <person name="Aklujkar M."/>
            <person name="Krushkal J."/>
            <person name="DiBartolo G."/>
            <person name="Lapidus A."/>
            <person name="Land M.L."/>
            <person name="Lovley D.R."/>
        </authorList>
    </citation>
    <scope>NUCLEOTIDE SEQUENCE [LARGE SCALE GENOMIC DNA]</scope>
    <source>
        <strain>ATCC 53774 / DSM 7210 / GS-15</strain>
    </source>
</reference>
<dbReference type="EMBL" id="CP000148">
    <property type="protein sequence ID" value="ABB32548.1"/>
    <property type="molecule type" value="Genomic_DNA"/>
</dbReference>
<dbReference type="RefSeq" id="WP_004513297.1">
    <property type="nucleotide sequence ID" value="NC_007517.1"/>
</dbReference>
<dbReference type="SMR" id="Q39T76"/>
<dbReference type="STRING" id="269799.Gmet_2323"/>
<dbReference type="DNASU" id="3739484"/>
<dbReference type="KEGG" id="gme:Gmet_2323"/>
<dbReference type="eggNOG" id="COG0227">
    <property type="taxonomic scope" value="Bacteria"/>
</dbReference>
<dbReference type="HOGENOM" id="CLU_064548_7_0_7"/>
<dbReference type="Proteomes" id="UP000007073">
    <property type="component" value="Chromosome"/>
</dbReference>
<dbReference type="GO" id="GO:1990904">
    <property type="term" value="C:ribonucleoprotein complex"/>
    <property type="evidence" value="ECO:0007669"/>
    <property type="project" value="UniProtKB-KW"/>
</dbReference>
<dbReference type="GO" id="GO:0005840">
    <property type="term" value="C:ribosome"/>
    <property type="evidence" value="ECO:0007669"/>
    <property type="project" value="UniProtKB-KW"/>
</dbReference>
<dbReference type="GO" id="GO:0003735">
    <property type="term" value="F:structural constituent of ribosome"/>
    <property type="evidence" value="ECO:0007669"/>
    <property type="project" value="InterPro"/>
</dbReference>
<dbReference type="GO" id="GO:0006412">
    <property type="term" value="P:translation"/>
    <property type="evidence" value="ECO:0007669"/>
    <property type="project" value="UniProtKB-UniRule"/>
</dbReference>
<dbReference type="Gene3D" id="2.20.150.30">
    <property type="match status" value="1"/>
</dbReference>
<dbReference type="Gene3D" id="2.30.170.40">
    <property type="entry name" value="Ribosomal protein L28/L24"/>
    <property type="match status" value="1"/>
</dbReference>
<dbReference type="HAMAP" id="MF_00373">
    <property type="entry name" value="Ribosomal_bL28"/>
    <property type="match status" value="1"/>
</dbReference>
<dbReference type="InterPro" id="IPR050096">
    <property type="entry name" value="Bacterial_rp_bL28"/>
</dbReference>
<dbReference type="InterPro" id="IPR026569">
    <property type="entry name" value="Ribosomal_bL28"/>
</dbReference>
<dbReference type="InterPro" id="IPR034704">
    <property type="entry name" value="Ribosomal_bL28/bL31-like_sf"/>
</dbReference>
<dbReference type="InterPro" id="IPR001383">
    <property type="entry name" value="Ribosomal_bL28_bact-type"/>
</dbReference>
<dbReference type="InterPro" id="IPR037147">
    <property type="entry name" value="Ribosomal_bL28_sf"/>
</dbReference>
<dbReference type="NCBIfam" id="TIGR00009">
    <property type="entry name" value="L28"/>
    <property type="match status" value="1"/>
</dbReference>
<dbReference type="PANTHER" id="PTHR39080">
    <property type="entry name" value="50S RIBOSOMAL PROTEIN L28"/>
    <property type="match status" value="1"/>
</dbReference>
<dbReference type="PANTHER" id="PTHR39080:SF1">
    <property type="entry name" value="LARGE RIBOSOMAL SUBUNIT PROTEIN BL28A"/>
    <property type="match status" value="1"/>
</dbReference>
<dbReference type="Pfam" id="PF00830">
    <property type="entry name" value="Ribosomal_L28"/>
    <property type="match status" value="1"/>
</dbReference>
<dbReference type="SUPFAM" id="SSF143800">
    <property type="entry name" value="L28p-like"/>
    <property type="match status" value="1"/>
</dbReference>
<organism>
    <name type="scientific">Geobacter metallireducens (strain ATCC 53774 / DSM 7210 / GS-15)</name>
    <dbReference type="NCBI Taxonomy" id="269799"/>
    <lineage>
        <taxon>Bacteria</taxon>
        <taxon>Pseudomonadati</taxon>
        <taxon>Thermodesulfobacteriota</taxon>
        <taxon>Desulfuromonadia</taxon>
        <taxon>Geobacterales</taxon>
        <taxon>Geobacteraceae</taxon>
        <taxon>Geobacter</taxon>
    </lineage>
</organism>
<sequence>MSRKCEICGKGPSFGNNVSHANNKTRTTWYPNLQKVKAVRNGSVQTIKVCTRCIRSGHVTKAI</sequence>
<gene>
    <name evidence="1" type="primary">rpmB</name>
    <name type="ordered locus">Gmet_2323</name>
</gene>
<keyword id="KW-1185">Reference proteome</keyword>
<keyword id="KW-0687">Ribonucleoprotein</keyword>
<keyword id="KW-0689">Ribosomal protein</keyword>
<evidence type="ECO:0000255" key="1">
    <source>
        <dbReference type="HAMAP-Rule" id="MF_00373"/>
    </source>
</evidence>
<evidence type="ECO:0000305" key="2"/>
<name>RL28_GEOMG</name>
<proteinExistence type="inferred from homology"/>
<accession>Q39T76</accession>